<reference key="1">
    <citation type="journal article" date="2003" name="Proc. Natl. Acad. Sci. U.S.A.">
        <title>The complete genome sequence of the Arabidopsis and tomato pathogen Pseudomonas syringae pv. tomato DC3000.</title>
        <authorList>
            <person name="Buell C.R."/>
            <person name="Joardar V."/>
            <person name="Lindeberg M."/>
            <person name="Selengut J."/>
            <person name="Paulsen I.T."/>
            <person name="Gwinn M.L."/>
            <person name="Dodson R.J."/>
            <person name="DeBoy R.T."/>
            <person name="Durkin A.S."/>
            <person name="Kolonay J.F."/>
            <person name="Madupu R."/>
            <person name="Daugherty S.C."/>
            <person name="Brinkac L.M."/>
            <person name="Beanan M.J."/>
            <person name="Haft D.H."/>
            <person name="Nelson W.C."/>
            <person name="Davidsen T.M."/>
            <person name="Zafar N."/>
            <person name="Zhou L."/>
            <person name="Liu J."/>
            <person name="Yuan Q."/>
            <person name="Khouri H.M."/>
            <person name="Fedorova N.B."/>
            <person name="Tran B."/>
            <person name="Russell D."/>
            <person name="Berry K.J."/>
            <person name="Utterback T.R."/>
            <person name="Van Aken S.E."/>
            <person name="Feldblyum T.V."/>
            <person name="D'Ascenzo M."/>
            <person name="Deng W.-L."/>
            <person name="Ramos A.R."/>
            <person name="Alfano J.R."/>
            <person name="Cartinhour S."/>
            <person name="Chatterjee A.K."/>
            <person name="Delaney T.P."/>
            <person name="Lazarowitz S.G."/>
            <person name="Martin G.B."/>
            <person name="Schneider D.J."/>
            <person name="Tang X."/>
            <person name="Bender C.L."/>
            <person name="White O."/>
            <person name="Fraser C.M."/>
            <person name="Collmer A."/>
        </authorList>
    </citation>
    <scope>NUCLEOTIDE SEQUENCE [LARGE SCALE GENOMIC DNA]</scope>
    <source>
        <strain>ATCC BAA-871 / DC3000</strain>
    </source>
</reference>
<dbReference type="EC" id="2.7.-.-" evidence="1"/>
<dbReference type="EMBL" id="AE016853">
    <property type="protein sequence ID" value="AAO58578.1"/>
    <property type="molecule type" value="Genomic_DNA"/>
</dbReference>
<dbReference type="RefSeq" id="NP_794883.1">
    <property type="nucleotide sequence ID" value="NC_004578.1"/>
</dbReference>
<dbReference type="RefSeq" id="WP_007245582.1">
    <property type="nucleotide sequence ID" value="NC_004578.1"/>
</dbReference>
<dbReference type="SMR" id="Q87UZ0"/>
<dbReference type="STRING" id="223283.PSPTO_5152"/>
<dbReference type="GeneID" id="61789091"/>
<dbReference type="KEGG" id="pst:PSPTO_5152"/>
<dbReference type="PATRIC" id="fig|223283.9.peg.5273"/>
<dbReference type="eggNOG" id="COG0661">
    <property type="taxonomic scope" value="Bacteria"/>
</dbReference>
<dbReference type="HOGENOM" id="CLU_006533_0_0_6"/>
<dbReference type="OrthoDB" id="9795390at2"/>
<dbReference type="PhylomeDB" id="Q87UZ0"/>
<dbReference type="UniPathway" id="UPA00232"/>
<dbReference type="Proteomes" id="UP000002515">
    <property type="component" value="Chromosome"/>
</dbReference>
<dbReference type="GO" id="GO:0005886">
    <property type="term" value="C:plasma membrane"/>
    <property type="evidence" value="ECO:0007669"/>
    <property type="project" value="UniProtKB-SubCell"/>
</dbReference>
<dbReference type="GO" id="GO:0005524">
    <property type="term" value="F:ATP binding"/>
    <property type="evidence" value="ECO:0007669"/>
    <property type="project" value="UniProtKB-KW"/>
</dbReference>
<dbReference type="GO" id="GO:0004672">
    <property type="term" value="F:protein kinase activity"/>
    <property type="evidence" value="ECO:0007669"/>
    <property type="project" value="UniProtKB-UniRule"/>
</dbReference>
<dbReference type="GO" id="GO:0010795">
    <property type="term" value="P:regulation of ubiquinone biosynthetic process"/>
    <property type="evidence" value="ECO:0007669"/>
    <property type="project" value="UniProtKB-UniRule"/>
</dbReference>
<dbReference type="GO" id="GO:0006744">
    <property type="term" value="P:ubiquinone biosynthetic process"/>
    <property type="evidence" value="ECO:0007669"/>
    <property type="project" value="UniProtKB-UniPathway"/>
</dbReference>
<dbReference type="CDD" id="cd13972">
    <property type="entry name" value="UbiB"/>
    <property type="match status" value="1"/>
</dbReference>
<dbReference type="HAMAP" id="MF_00414">
    <property type="entry name" value="UbiB"/>
    <property type="match status" value="1"/>
</dbReference>
<dbReference type="InterPro" id="IPR004147">
    <property type="entry name" value="ABC1_dom"/>
</dbReference>
<dbReference type="InterPro" id="IPR011009">
    <property type="entry name" value="Kinase-like_dom_sf"/>
</dbReference>
<dbReference type="InterPro" id="IPR010232">
    <property type="entry name" value="UbiB"/>
</dbReference>
<dbReference type="InterPro" id="IPR045308">
    <property type="entry name" value="UbiB_bact"/>
</dbReference>
<dbReference type="InterPro" id="IPR050154">
    <property type="entry name" value="UbiB_kinase"/>
</dbReference>
<dbReference type="NCBIfam" id="NF003404">
    <property type="entry name" value="PRK04750.1"/>
    <property type="match status" value="1"/>
</dbReference>
<dbReference type="NCBIfam" id="TIGR01982">
    <property type="entry name" value="UbiB"/>
    <property type="match status" value="1"/>
</dbReference>
<dbReference type="PANTHER" id="PTHR10566">
    <property type="entry name" value="CHAPERONE-ACTIVITY OF BC1 COMPLEX CABC1 -RELATED"/>
    <property type="match status" value="1"/>
</dbReference>
<dbReference type="PANTHER" id="PTHR10566:SF113">
    <property type="entry name" value="PROTEIN ACTIVITY OF BC1 COMPLEX KINASE 7, CHLOROPLASTIC"/>
    <property type="match status" value="1"/>
</dbReference>
<dbReference type="Pfam" id="PF03109">
    <property type="entry name" value="ABC1"/>
    <property type="match status" value="1"/>
</dbReference>
<dbReference type="SUPFAM" id="SSF56112">
    <property type="entry name" value="Protein kinase-like (PK-like)"/>
    <property type="match status" value="1"/>
</dbReference>
<organism>
    <name type="scientific">Pseudomonas syringae pv. tomato (strain ATCC BAA-871 / DC3000)</name>
    <dbReference type="NCBI Taxonomy" id="223283"/>
    <lineage>
        <taxon>Bacteria</taxon>
        <taxon>Pseudomonadati</taxon>
        <taxon>Pseudomonadota</taxon>
        <taxon>Gammaproteobacteria</taxon>
        <taxon>Pseudomonadales</taxon>
        <taxon>Pseudomonadaceae</taxon>
        <taxon>Pseudomonas</taxon>
    </lineage>
</organism>
<proteinExistence type="inferred from homology"/>
<comment type="function">
    <text evidence="1">Is probably a protein kinase regulator of UbiI activity which is involved in aerobic coenzyme Q (ubiquinone) biosynthesis.</text>
</comment>
<comment type="pathway">
    <text>Cofactor biosynthesis; ubiquinone biosynthesis [regulation].</text>
</comment>
<comment type="subcellular location">
    <subcellularLocation>
        <location evidence="1">Cell inner membrane</location>
        <topology evidence="1">Multi-pass membrane protein</topology>
    </subcellularLocation>
</comment>
<comment type="similarity">
    <text evidence="1">Belongs to the ABC1 family. UbiB subfamily.</text>
</comment>
<sequence length="539" mass="62236">MKLLAVRRLFRIQRVVIRYRLDDLLFALPLPWWMLAVRFVLPWRWLPRRKSELSRGVRFRLALQDLGPIFIKFGQLLSTRRDLLPEDIADELMLLQDRVPPFDQQVAIKLIEEQLGARICDVFSRFDETPLASASVAQVHAACLKTGEEVVVKVVRPGLKPIIGQDLAWLFILARMAERVSADARLLHPVQVVMDYEKTIYDELDLLREAANSSQLRRNFEGSDLLYVPQVYWDWCRPKVLVMERIYGLQVTDMAGLADQRTDMKMLAERGVEIFFTQIFRDSFFHADMHPGNIFVSTVNPWAPKYIAIDCGIVGSLTPEDQDYLARNLFAFFKRDYRRVAQLHIDSGWVPAETKLNEFEAAIRTVCEPIFEKPLKDISFGQVLMRLFQTARRFNMEVQPQLVLLQKTLLNIEGLGRQLYPELDLWSTAQPYLERWMRERVSPKTLLGNLQSQVEQLPHIAGMTRDLLERMSRPHASDPPRPWHDRKDEPVLRLIGAALLVGGAIQGWVMSEAATQLLTLTAWPAAIMLIAGLYLIVRR</sequence>
<keyword id="KW-0067">ATP-binding</keyword>
<keyword id="KW-0997">Cell inner membrane</keyword>
<keyword id="KW-1003">Cell membrane</keyword>
<keyword id="KW-0418">Kinase</keyword>
<keyword id="KW-0472">Membrane</keyword>
<keyword id="KW-0547">Nucleotide-binding</keyword>
<keyword id="KW-1185">Reference proteome</keyword>
<keyword id="KW-0808">Transferase</keyword>
<keyword id="KW-0812">Transmembrane</keyword>
<keyword id="KW-1133">Transmembrane helix</keyword>
<keyword id="KW-0831">Ubiquinone biosynthesis</keyword>
<protein>
    <recommendedName>
        <fullName evidence="1">Probable protein kinase UbiB</fullName>
        <ecNumber evidence="1">2.7.-.-</ecNumber>
    </recommendedName>
    <alternativeName>
        <fullName evidence="1">Ubiquinone biosynthesis protein UbiB</fullName>
    </alternativeName>
</protein>
<feature type="chain" id="PRO_0000200715" description="Probable protein kinase UbiB">
    <location>
        <begin position="1"/>
        <end position="539"/>
    </location>
</feature>
<feature type="transmembrane region" description="Helical" evidence="1">
    <location>
        <begin position="23"/>
        <end position="43"/>
    </location>
</feature>
<feature type="transmembrane region" description="Helical" evidence="1">
    <location>
        <begin position="494"/>
        <end position="514"/>
    </location>
</feature>
<feature type="transmembrane region" description="Helical" evidence="1">
    <location>
        <begin position="517"/>
        <end position="537"/>
    </location>
</feature>
<feature type="domain" description="Protein kinase" evidence="1">
    <location>
        <begin position="125"/>
        <end position="492"/>
    </location>
</feature>
<feature type="active site" description="Proton acceptor" evidence="1">
    <location>
        <position position="288"/>
    </location>
</feature>
<feature type="binding site" evidence="1">
    <location>
        <begin position="131"/>
        <end position="139"/>
    </location>
    <ligand>
        <name>ATP</name>
        <dbReference type="ChEBI" id="CHEBI:30616"/>
    </ligand>
</feature>
<feature type="binding site" evidence="1">
    <location>
        <position position="153"/>
    </location>
    <ligand>
        <name>ATP</name>
        <dbReference type="ChEBI" id="CHEBI:30616"/>
    </ligand>
</feature>
<evidence type="ECO:0000255" key="1">
    <source>
        <dbReference type="HAMAP-Rule" id="MF_00414"/>
    </source>
</evidence>
<name>UBIB_PSESM</name>
<gene>
    <name evidence="1" type="primary">ubiB</name>
    <name type="ordered locus">PSPTO_5152</name>
</gene>
<accession>Q87UZ0</accession>